<comment type="function">
    <text evidence="1">Catalyzes the transfer of a ribosyl phosphate group from 5-phosphoribose 1-diphosphate to orotate, leading to the formation of orotidine monophosphate (OMP).</text>
</comment>
<comment type="catalytic activity">
    <reaction evidence="1">
        <text>orotidine 5'-phosphate + diphosphate = orotate + 5-phospho-alpha-D-ribose 1-diphosphate</text>
        <dbReference type="Rhea" id="RHEA:10380"/>
        <dbReference type="ChEBI" id="CHEBI:30839"/>
        <dbReference type="ChEBI" id="CHEBI:33019"/>
        <dbReference type="ChEBI" id="CHEBI:57538"/>
        <dbReference type="ChEBI" id="CHEBI:58017"/>
        <dbReference type="EC" id="2.4.2.10"/>
    </reaction>
</comment>
<comment type="cofactor">
    <cofactor evidence="1">
        <name>Mg(2+)</name>
        <dbReference type="ChEBI" id="CHEBI:18420"/>
    </cofactor>
</comment>
<comment type="pathway">
    <text evidence="1">Pyrimidine metabolism; UMP biosynthesis via de novo pathway; UMP from orotate: step 1/2.</text>
</comment>
<comment type="subunit">
    <text evidence="1">Homodimer.</text>
</comment>
<comment type="similarity">
    <text evidence="1">Belongs to the purine/pyrimidine phosphoribosyltransferase family. PyrE subfamily.</text>
</comment>
<evidence type="ECO:0000255" key="1">
    <source>
        <dbReference type="HAMAP-Rule" id="MF_01208"/>
    </source>
</evidence>
<proteinExistence type="inferred from homology"/>
<keyword id="KW-0328">Glycosyltransferase</keyword>
<keyword id="KW-0460">Magnesium</keyword>
<keyword id="KW-0665">Pyrimidine biosynthesis</keyword>
<keyword id="KW-0808">Transferase</keyword>
<sequence>MKPYQRQFIEFALSKQVLKFGEFTLKSGRKSPYFFNAGLFNTGRDLALLGRFYAEALVDSGIEFDLLFGPAYKGIPIATTTAVALAEHHDLDLPYCFNRKEAKDHGEGGNLVGSALQGRVMLVDDVITAGTAIRESMEIIQANGATLAGVLISLDRQERGRGEISAIQEVERDYNCKVISIITLKDLIAYLEEKPEMAEHLAAVKAYREEFGV</sequence>
<feature type="chain" id="PRO_1000164682" description="Orotate phosphoribosyltransferase">
    <location>
        <begin position="1"/>
        <end position="213"/>
    </location>
</feature>
<feature type="binding site" description="in other chain" evidence="1">
    <location>
        <position position="26"/>
    </location>
    <ligand>
        <name>5-phospho-alpha-D-ribose 1-diphosphate</name>
        <dbReference type="ChEBI" id="CHEBI:58017"/>
        <note>ligand shared between dimeric partners</note>
    </ligand>
</feature>
<feature type="binding site" evidence="1">
    <location>
        <begin position="34"/>
        <end position="35"/>
    </location>
    <ligand>
        <name>orotate</name>
        <dbReference type="ChEBI" id="CHEBI:30839"/>
    </ligand>
</feature>
<feature type="binding site" description="in other chain" evidence="1">
    <location>
        <begin position="72"/>
        <end position="73"/>
    </location>
    <ligand>
        <name>5-phospho-alpha-D-ribose 1-diphosphate</name>
        <dbReference type="ChEBI" id="CHEBI:58017"/>
        <note>ligand shared between dimeric partners</note>
    </ligand>
</feature>
<feature type="binding site" evidence="1">
    <location>
        <position position="99"/>
    </location>
    <ligand>
        <name>5-phospho-alpha-D-ribose 1-diphosphate</name>
        <dbReference type="ChEBI" id="CHEBI:58017"/>
        <note>ligand shared between dimeric partners</note>
    </ligand>
</feature>
<feature type="binding site" description="in other chain" evidence="1">
    <location>
        <position position="100"/>
    </location>
    <ligand>
        <name>5-phospho-alpha-D-ribose 1-diphosphate</name>
        <dbReference type="ChEBI" id="CHEBI:58017"/>
        <note>ligand shared between dimeric partners</note>
    </ligand>
</feature>
<feature type="binding site" evidence="1">
    <location>
        <position position="103"/>
    </location>
    <ligand>
        <name>5-phospho-alpha-D-ribose 1-diphosphate</name>
        <dbReference type="ChEBI" id="CHEBI:58017"/>
        <note>ligand shared between dimeric partners</note>
    </ligand>
</feature>
<feature type="binding site" evidence="1">
    <location>
        <position position="105"/>
    </location>
    <ligand>
        <name>5-phospho-alpha-D-ribose 1-diphosphate</name>
        <dbReference type="ChEBI" id="CHEBI:58017"/>
        <note>ligand shared between dimeric partners</note>
    </ligand>
</feature>
<feature type="binding site" description="in other chain" evidence="1">
    <location>
        <begin position="124"/>
        <end position="132"/>
    </location>
    <ligand>
        <name>5-phospho-alpha-D-ribose 1-diphosphate</name>
        <dbReference type="ChEBI" id="CHEBI:58017"/>
        <note>ligand shared between dimeric partners</note>
    </ligand>
</feature>
<feature type="binding site" evidence="1">
    <location>
        <position position="128"/>
    </location>
    <ligand>
        <name>orotate</name>
        <dbReference type="ChEBI" id="CHEBI:30839"/>
    </ligand>
</feature>
<feature type="binding site" evidence="1">
    <location>
        <position position="156"/>
    </location>
    <ligand>
        <name>orotate</name>
        <dbReference type="ChEBI" id="CHEBI:30839"/>
    </ligand>
</feature>
<accession>B7N1U3</accession>
<organism>
    <name type="scientific">Escherichia coli O81 (strain ED1a)</name>
    <dbReference type="NCBI Taxonomy" id="585397"/>
    <lineage>
        <taxon>Bacteria</taxon>
        <taxon>Pseudomonadati</taxon>
        <taxon>Pseudomonadota</taxon>
        <taxon>Gammaproteobacteria</taxon>
        <taxon>Enterobacterales</taxon>
        <taxon>Enterobacteriaceae</taxon>
        <taxon>Escherichia</taxon>
    </lineage>
</organism>
<gene>
    <name evidence="1" type="primary">pyrE</name>
    <name type="ordered locus">ECED1_4326</name>
</gene>
<dbReference type="EC" id="2.4.2.10" evidence="1"/>
<dbReference type="EMBL" id="CU928162">
    <property type="protein sequence ID" value="CAR10313.1"/>
    <property type="molecule type" value="Genomic_DNA"/>
</dbReference>
<dbReference type="RefSeq" id="WP_000806177.1">
    <property type="nucleotide sequence ID" value="NC_011745.1"/>
</dbReference>
<dbReference type="SMR" id="B7N1U3"/>
<dbReference type="GeneID" id="75202211"/>
<dbReference type="KEGG" id="ecq:ECED1_4326"/>
<dbReference type="HOGENOM" id="CLU_074878_0_1_6"/>
<dbReference type="UniPathway" id="UPA00070">
    <property type="reaction ID" value="UER00119"/>
</dbReference>
<dbReference type="Proteomes" id="UP000000748">
    <property type="component" value="Chromosome"/>
</dbReference>
<dbReference type="GO" id="GO:0005737">
    <property type="term" value="C:cytoplasm"/>
    <property type="evidence" value="ECO:0007669"/>
    <property type="project" value="TreeGrafter"/>
</dbReference>
<dbReference type="GO" id="GO:0000287">
    <property type="term" value="F:magnesium ion binding"/>
    <property type="evidence" value="ECO:0007669"/>
    <property type="project" value="UniProtKB-UniRule"/>
</dbReference>
<dbReference type="GO" id="GO:0004588">
    <property type="term" value="F:orotate phosphoribosyltransferase activity"/>
    <property type="evidence" value="ECO:0007669"/>
    <property type="project" value="UniProtKB-UniRule"/>
</dbReference>
<dbReference type="GO" id="GO:0006207">
    <property type="term" value="P:'de novo' pyrimidine nucleobase biosynthetic process"/>
    <property type="evidence" value="ECO:0007669"/>
    <property type="project" value="TreeGrafter"/>
</dbReference>
<dbReference type="GO" id="GO:0044205">
    <property type="term" value="P:'de novo' UMP biosynthetic process"/>
    <property type="evidence" value="ECO:0007669"/>
    <property type="project" value="UniProtKB-UniRule"/>
</dbReference>
<dbReference type="GO" id="GO:0046132">
    <property type="term" value="P:pyrimidine ribonucleoside biosynthetic process"/>
    <property type="evidence" value="ECO:0007669"/>
    <property type="project" value="TreeGrafter"/>
</dbReference>
<dbReference type="CDD" id="cd06223">
    <property type="entry name" value="PRTases_typeI"/>
    <property type="match status" value="1"/>
</dbReference>
<dbReference type="FunFam" id="3.40.50.2020:FF:000008">
    <property type="entry name" value="Orotate phosphoribosyltransferase"/>
    <property type="match status" value="1"/>
</dbReference>
<dbReference type="Gene3D" id="3.40.50.2020">
    <property type="match status" value="1"/>
</dbReference>
<dbReference type="HAMAP" id="MF_01208">
    <property type="entry name" value="PyrE"/>
    <property type="match status" value="1"/>
</dbReference>
<dbReference type="InterPro" id="IPR023031">
    <property type="entry name" value="OPRT"/>
</dbReference>
<dbReference type="InterPro" id="IPR004467">
    <property type="entry name" value="Or_phspho_trans_dom"/>
</dbReference>
<dbReference type="InterPro" id="IPR000836">
    <property type="entry name" value="PRibTrfase_dom"/>
</dbReference>
<dbReference type="InterPro" id="IPR029057">
    <property type="entry name" value="PRTase-like"/>
</dbReference>
<dbReference type="NCBIfam" id="TIGR00336">
    <property type="entry name" value="pyrE"/>
    <property type="match status" value="1"/>
</dbReference>
<dbReference type="PANTHER" id="PTHR46683">
    <property type="entry name" value="OROTATE PHOSPHORIBOSYLTRANSFERASE 1-RELATED"/>
    <property type="match status" value="1"/>
</dbReference>
<dbReference type="PANTHER" id="PTHR46683:SF1">
    <property type="entry name" value="OROTATE PHOSPHORIBOSYLTRANSFERASE 1-RELATED"/>
    <property type="match status" value="1"/>
</dbReference>
<dbReference type="Pfam" id="PF00156">
    <property type="entry name" value="Pribosyltran"/>
    <property type="match status" value="1"/>
</dbReference>
<dbReference type="SUPFAM" id="SSF53271">
    <property type="entry name" value="PRTase-like"/>
    <property type="match status" value="1"/>
</dbReference>
<dbReference type="PROSITE" id="PS00103">
    <property type="entry name" value="PUR_PYR_PR_TRANSFER"/>
    <property type="match status" value="1"/>
</dbReference>
<protein>
    <recommendedName>
        <fullName evidence="1">Orotate phosphoribosyltransferase</fullName>
        <shortName evidence="1">OPRT</shortName>
        <shortName evidence="1">OPRTase</shortName>
        <ecNumber evidence="1">2.4.2.10</ecNumber>
    </recommendedName>
</protein>
<name>PYRE_ECO81</name>
<reference key="1">
    <citation type="journal article" date="2009" name="PLoS Genet.">
        <title>Organised genome dynamics in the Escherichia coli species results in highly diverse adaptive paths.</title>
        <authorList>
            <person name="Touchon M."/>
            <person name="Hoede C."/>
            <person name="Tenaillon O."/>
            <person name="Barbe V."/>
            <person name="Baeriswyl S."/>
            <person name="Bidet P."/>
            <person name="Bingen E."/>
            <person name="Bonacorsi S."/>
            <person name="Bouchier C."/>
            <person name="Bouvet O."/>
            <person name="Calteau A."/>
            <person name="Chiapello H."/>
            <person name="Clermont O."/>
            <person name="Cruveiller S."/>
            <person name="Danchin A."/>
            <person name="Diard M."/>
            <person name="Dossat C."/>
            <person name="Karoui M.E."/>
            <person name="Frapy E."/>
            <person name="Garry L."/>
            <person name="Ghigo J.M."/>
            <person name="Gilles A.M."/>
            <person name="Johnson J."/>
            <person name="Le Bouguenec C."/>
            <person name="Lescat M."/>
            <person name="Mangenot S."/>
            <person name="Martinez-Jehanne V."/>
            <person name="Matic I."/>
            <person name="Nassif X."/>
            <person name="Oztas S."/>
            <person name="Petit M.A."/>
            <person name="Pichon C."/>
            <person name="Rouy Z."/>
            <person name="Ruf C.S."/>
            <person name="Schneider D."/>
            <person name="Tourret J."/>
            <person name="Vacherie B."/>
            <person name="Vallenet D."/>
            <person name="Medigue C."/>
            <person name="Rocha E.P.C."/>
            <person name="Denamur E."/>
        </authorList>
    </citation>
    <scope>NUCLEOTIDE SEQUENCE [LARGE SCALE GENOMIC DNA]</scope>
    <source>
        <strain>ED1a</strain>
    </source>
</reference>